<reference key="1">
    <citation type="submission" date="2003-03" db="EMBL/GenBank/DDBJ databases">
        <title>African swine fever virus genomes.</title>
        <authorList>
            <person name="Kutish G.F."/>
            <person name="Rock D.L."/>
        </authorList>
    </citation>
    <scope>NUCLEOTIDE SEQUENCE [GENOMIC DNA]</scope>
</reference>
<gene>
    <name type="ordered locus">Pret-138</name>
</gene>
<organism>
    <name type="scientific">African swine fever virus (isolate Tick/South Africa/Pretoriuskop Pr4/1996)</name>
    <name type="common">ASFV</name>
    <dbReference type="NCBI Taxonomy" id="561443"/>
    <lineage>
        <taxon>Viruses</taxon>
        <taxon>Varidnaviria</taxon>
        <taxon>Bamfordvirae</taxon>
        <taxon>Nucleocytoviricota</taxon>
        <taxon>Pokkesviricetes</taxon>
        <taxon>Asfuvirales</taxon>
        <taxon>Asfarviridae</taxon>
        <taxon>Asfivirus</taxon>
        <taxon>African swine fever virus</taxon>
    </lineage>
</organism>
<protein>
    <recommendedName>
        <fullName evidence="1">Inner membrane protein p54</fullName>
    </recommendedName>
    <alternativeName>
        <fullName evidence="1">pE183L</fullName>
    </alternativeName>
</protein>
<proteinExistence type="inferred from homology"/>
<comment type="function">
    <text evidence="1">Inner envelope protein involved, through its interaction with host dynein, in the intracellular microtubule-dependent transport of viral capsid toward viral factories (By similarity). Seems to induce caspase-3 activation and apoptosis (By similarity). Plays a role in virion morphogenesis by recruiting and transforming the host ER membranes into the precursors of the viral envelope (By similarity). Involved in virus attachment to the host cell (By similarity).</text>
</comment>
<comment type="subunit">
    <text evidence="1">Interacts with the host light chain cytoplasmic dynein DYNLL1; this interaction is critical for intracellular microtubule-dependent virus transport toward viral factories.</text>
</comment>
<comment type="subcellular location">
    <subcellularLocation>
        <location evidence="1">Virion membrane</location>
        <topology evidence="1">Single-pass membrane protein</topology>
    </subcellularLocation>
    <subcellularLocation>
        <location evidence="1">Host cytoplasm</location>
        <location evidence="1">Host cytoskeleton</location>
    </subcellularLocation>
    <subcellularLocation>
        <location evidence="1">Host endoplasmic reticulum membrane</location>
    </subcellularLocation>
    <text evidence="1">Detected mainly on membrane-like structures within viral factories. Present in mature extracellular virions. Host DYNLL1 and viral p54 interact at the microtubular organizing center (By similarity). Found in the inner envelope of the virus (By similarity).</text>
</comment>
<comment type="induction">
    <text evidence="4">Expressed in the late phase of the viral replicative cycle.</text>
</comment>
<comment type="similarity">
    <text evidence="4">Belongs to the asfivirus envelope protein p54 family.</text>
</comment>
<sequence length="197" mass="20966">MDSEFFQPVYPRHYGECLSPVSTPSFFSTHMYTILIAIVVLVIIIIVLIYLFSSRKKKAAAAIEEEDIQFINPYQDQQWVEVTPQPGTSKPAGATTASVGKPVTGRPATNRPVTDRPATNNPVTDRLVMATGGPAAVSAAASAAASAAASAAASAPAHPAEPYTTVTTQNTASQTMSAIENLRQRSTYTHKDLENSL</sequence>
<keyword id="KW-0053">Apoptosis</keyword>
<keyword id="KW-1176">Cytoplasmic inwards viral transport</keyword>
<keyword id="KW-1035">Host cytoplasm</keyword>
<keyword id="KW-1037">Host cytoskeleton</keyword>
<keyword id="KW-1038">Host endoplasmic reticulum</keyword>
<keyword id="KW-1043">Host membrane</keyword>
<keyword id="KW-0945">Host-virus interaction</keyword>
<keyword id="KW-0426">Late protein</keyword>
<keyword id="KW-0472">Membrane</keyword>
<keyword id="KW-1177">Microtubular inwards viral transport</keyword>
<keyword id="KW-0677">Repeat</keyword>
<keyword id="KW-0812">Transmembrane</keyword>
<keyword id="KW-1133">Transmembrane helix</keyword>
<keyword id="KW-0261">Viral envelope protein</keyword>
<keyword id="KW-0946">Virion</keyword>
<keyword id="KW-1160">Virus entry into host cell</keyword>
<name>P54_ASFP4</name>
<accession>P0C9Z9</accession>
<dbReference type="EMBL" id="AY261363">
    <property type="status" value="NOT_ANNOTATED_CDS"/>
    <property type="molecule type" value="Genomic_DNA"/>
</dbReference>
<dbReference type="SMR" id="P0C9Z9"/>
<dbReference type="Proteomes" id="UP000000859">
    <property type="component" value="Segment"/>
</dbReference>
<dbReference type="GO" id="GO:0043657">
    <property type="term" value="C:host cell"/>
    <property type="evidence" value="ECO:0007669"/>
    <property type="project" value="GOC"/>
</dbReference>
<dbReference type="GO" id="GO:0044167">
    <property type="term" value="C:host cell endoplasmic reticulum membrane"/>
    <property type="evidence" value="ECO:0007669"/>
    <property type="project" value="UniProtKB-SubCell"/>
</dbReference>
<dbReference type="GO" id="GO:0044163">
    <property type="term" value="C:host cytoskeleton"/>
    <property type="evidence" value="ECO:0007669"/>
    <property type="project" value="UniProtKB-SubCell"/>
</dbReference>
<dbReference type="GO" id="GO:0016020">
    <property type="term" value="C:membrane"/>
    <property type="evidence" value="ECO:0007669"/>
    <property type="project" value="UniProtKB-KW"/>
</dbReference>
<dbReference type="GO" id="GO:0019031">
    <property type="term" value="C:viral envelope"/>
    <property type="evidence" value="ECO:0007669"/>
    <property type="project" value="UniProtKB-KW"/>
</dbReference>
<dbReference type="GO" id="GO:0055036">
    <property type="term" value="C:virion membrane"/>
    <property type="evidence" value="ECO:0007669"/>
    <property type="project" value="UniProtKB-SubCell"/>
</dbReference>
<dbReference type="GO" id="GO:0075521">
    <property type="term" value="P:microtubule-dependent intracellular transport of viral material towards nucleus"/>
    <property type="evidence" value="ECO:0007669"/>
    <property type="project" value="UniProtKB-KW"/>
</dbReference>
<dbReference type="GO" id="GO:0046718">
    <property type="term" value="P:symbiont entry into host cell"/>
    <property type="evidence" value="ECO:0007669"/>
    <property type="project" value="UniProtKB-KW"/>
</dbReference>
<dbReference type="InterPro" id="IPR008385">
    <property type="entry name" value="ASFV_p54"/>
</dbReference>
<dbReference type="Pfam" id="PF05568">
    <property type="entry name" value="ASFV_J13L"/>
    <property type="match status" value="1"/>
</dbReference>
<organismHost>
    <name type="scientific">Ornithodoros</name>
    <name type="common">relapsing fever ticks</name>
    <dbReference type="NCBI Taxonomy" id="6937"/>
</organismHost>
<organismHost>
    <name type="scientific">Phacochoerus aethiopicus</name>
    <name type="common">Warthog</name>
    <dbReference type="NCBI Taxonomy" id="85517"/>
</organismHost>
<organismHost>
    <name type="scientific">Phacochoerus africanus</name>
    <name type="common">Warthog</name>
    <dbReference type="NCBI Taxonomy" id="41426"/>
</organismHost>
<organismHost>
    <name type="scientific">Potamochoerus larvatus</name>
    <name type="common">Bushpig</name>
    <dbReference type="NCBI Taxonomy" id="273792"/>
</organismHost>
<organismHost>
    <name type="scientific">Sus scrofa</name>
    <name type="common">Pig</name>
    <dbReference type="NCBI Taxonomy" id="9823"/>
</organismHost>
<evidence type="ECO:0000250" key="1">
    <source>
        <dbReference type="UniProtKB" id="Q65194"/>
    </source>
</evidence>
<evidence type="ECO:0000255" key="2"/>
<evidence type="ECO:0000256" key="3">
    <source>
        <dbReference type="SAM" id="MobiDB-lite"/>
    </source>
</evidence>
<evidence type="ECO:0000305" key="4"/>
<feature type="chain" id="PRO_0000373419" description="Inner membrane protein p54">
    <location>
        <begin position="1"/>
        <end position="197"/>
    </location>
</feature>
<feature type="transmembrane region" description="Helical" evidence="2">
    <location>
        <begin position="32"/>
        <end position="52"/>
    </location>
</feature>
<feature type="repeat" description="1">
    <location>
        <begin position="139"/>
        <end position="142"/>
    </location>
</feature>
<feature type="repeat" description="2">
    <location>
        <begin position="143"/>
        <end position="146"/>
    </location>
</feature>
<feature type="repeat" description="3">
    <location>
        <begin position="147"/>
        <end position="150"/>
    </location>
</feature>
<feature type="repeat" description="4">
    <location>
        <begin position="151"/>
        <end position="154"/>
    </location>
</feature>
<feature type="region of interest" description="Disordered" evidence="3">
    <location>
        <begin position="84"/>
        <end position="123"/>
    </location>
</feature>
<feature type="region of interest" description="4 X 4 AA tandem repeats of A-A-A-S">
    <location>
        <begin position="139"/>
        <end position="154"/>
    </location>
</feature>
<feature type="region of interest" description="Interaction with host DYNLL1" evidence="1">
    <location>
        <begin position="163"/>
        <end position="175"/>
    </location>
</feature>